<sequence length="88" mass="9701">MANSKSAKKRALQSEKRRQHNASRRSMLRTYVKKVIAAIKAGDHKTATEAFAAAQPIVDRMATKGLIHKNKAARHKARLNAKIKALAA</sequence>
<accession>Q0HS79</accession>
<organism>
    <name type="scientific">Shewanella sp. (strain MR-7)</name>
    <dbReference type="NCBI Taxonomy" id="60481"/>
    <lineage>
        <taxon>Bacteria</taxon>
        <taxon>Pseudomonadati</taxon>
        <taxon>Pseudomonadota</taxon>
        <taxon>Gammaproteobacteria</taxon>
        <taxon>Alteromonadales</taxon>
        <taxon>Shewanellaceae</taxon>
        <taxon>Shewanella</taxon>
    </lineage>
</organism>
<dbReference type="EMBL" id="CP000444">
    <property type="protein sequence ID" value="ABI44026.1"/>
    <property type="molecule type" value="Genomic_DNA"/>
</dbReference>
<dbReference type="SMR" id="Q0HS79"/>
<dbReference type="KEGG" id="shm:Shewmr7_3042"/>
<dbReference type="HOGENOM" id="CLU_160655_4_0_6"/>
<dbReference type="GO" id="GO:0005829">
    <property type="term" value="C:cytosol"/>
    <property type="evidence" value="ECO:0007669"/>
    <property type="project" value="TreeGrafter"/>
</dbReference>
<dbReference type="GO" id="GO:0015935">
    <property type="term" value="C:small ribosomal subunit"/>
    <property type="evidence" value="ECO:0007669"/>
    <property type="project" value="TreeGrafter"/>
</dbReference>
<dbReference type="GO" id="GO:0070181">
    <property type="term" value="F:small ribosomal subunit rRNA binding"/>
    <property type="evidence" value="ECO:0007669"/>
    <property type="project" value="TreeGrafter"/>
</dbReference>
<dbReference type="GO" id="GO:0003735">
    <property type="term" value="F:structural constituent of ribosome"/>
    <property type="evidence" value="ECO:0007669"/>
    <property type="project" value="InterPro"/>
</dbReference>
<dbReference type="GO" id="GO:0006412">
    <property type="term" value="P:translation"/>
    <property type="evidence" value="ECO:0007669"/>
    <property type="project" value="UniProtKB-UniRule"/>
</dbReference>
<dbReference type="FunFam" id="1.20.58.110:FF:000001">
    <property type="entry name" value="30S ribosomal protein S20"/>
    <property type="match status" value="1"/>
</dbReference>
<dbReference type="Gene3D" id="1.20.58.110">
    <property type="entry name" value="Ribosomal protein S20"/>
    <property type="match status" value="1"/>
</dbReference>
<dbReference type="HAMAP" id="MF_00500">
    <property type="entry name" value="Ribosomal_bS20"/>
    <property type="match status" value="1"/>
</dbReference>
<dbReference type="InterPro" id="IPR002583">
    <property type="entry name" value="Ribosomal_bS20"/>
</dbReference>
<dbReference type="InterPro" id="IPR036510">
    <property type="entry name" value="Ribosomal_bS20_sf"/>
</dbReference>
<dbReference type="NCBIfam" id="TIGR00029">
    <property type="entry name" value="S20"/>
    <property type="match status" value="1"/>
</dbReference>
<dbReference type="PANTHER" id="PTHR33398">
    <property type="entry name" value="30S RIBOSOMAL PROTEIN S20"/>
    <property type="match status" value="1"/>
</dbReference>
<dbReference type="PANTHER" id="PTHR33398:SF1">
    <property type="entry name" value="SMALL RIBOSOMAL SUBUNIT PROTEIN BS20C"/>
    <property type="match status" value="1"/>
</dbReference>
<dbReference type="Pfam" id="PF01649">
    <property type="entry name" value="Ribosomal_S20p"/>
    <property type="match status" value="1"/>
</dbReference>
<dbReference type="SUPFAM" id="SSF46992">
    <property type="entry name" value="Ribosomal protein S20"/>
    <property type="match status" value="1"/>
</dbReference>
<keyword id="KW-0687">Ribonucleoprotein</keyword>
<keyword id="KW-0689">Ribosomal protein</keyword>
<keyword id="KW-0694">RNA-binding</keyword>
<keyword id="KW-0699">rRNA-binding</keyword>
<comment type="function">
    <text evidence="1">Binds directly to 16S ribosomal RNA.</text>
</comment>
<comment type="similarity">
    <text evidence="1">Belongs to the bacterial ribosomal protein bS20 family.</text>
</comment>
<proteinExistence type="inferred from homology"/>
<evidence type="ECO:0000255" key="1">
    <source>
        <dbReference type="HAMAP-Rule" id="MF_00500"/>
    </source>
</evidence>
<evidence type="ECO:0000256" key="2">
    <source>
        <dbReference type="SAM" id="MobiDB-lite"/>
    </source>
</evidence>
<evidence type="ECO:0000305" key="3"/>
<feature type="chain" id="PRO_1000014656" description="Small ribosomal subunit protein bS20">
    <location>
        <begin position="1"/>
        <end position="88"/>
    </location>
</feature>
<feature type="region of interest" description="Disordered" evidence="2">
    <location>
        <begin position="1"/>
        <end position="27"/>
    </location>
</feature>
<name>RS20_SHESR</name>
<protein>
    <recommendedName>
        <fullName evidence="1">Small ribosomal subunit protein bS20</fullName>
    </recommendedName>
    <alternativeName>
        <fullName evidence="3">30S ribosomal protein S20</fullName>
    </alternativeName>
</protein>
<gene>
    <name evidence="1" type="primary">rpsT</name>
    <name type="ordered locus">Shewmr7_3042</name>
</gene>
<reference key="1">
    <citation type="submission" date="2006-08" db="EMBL/GenBank/DDBJ databases">
        <title>Complete sequence of chromosome 1 of Shewanella sp. MR-7.</title>
        <authorList>
            <person name="Copeland A."/>
            <person name="Lucas S."/>
            <person name="Lapidus A."/>
            <person name="Barry K."/>
            <person name="Detter J.C."/>
            <person name="Glavina del Rio T."/>
            <person name="Hammon N."/>
            <person name="Israni S."/>
            <person name="Dalin E."/>
            <person name="Tice H."/>
            <person name="Pitluck S."/>
            <person name="Kiss H."/>
            <person name="Brettin T."/>
            <person name="Bruce D."/>
            <person name="Han C."/>
            <person name="Tapia R."/>
            <person name="Gilna P."/>
            <person name="Schmutz J."/>
            <person name="Larimer F."/>
            <person name="Land M."/>
            <person name="Hauser L."/>
            <person name="Kyrpides N."/>
            <person name="Mikhailova N."/>
            <person name="Nealson K."/>
            <person name="Konstantinidis K."/>
            <person name="Klappenbach J."/>
            <person name="Tiedje J."/>
            <person name="Richardson P."/>
        </authorList>
    </citation>
    <scope>NUCLEOTIDE SEQUENCE [LARGE SCALE GENOMIC DNA]</scope>
    <source>
        <strain>MR-7</strain>
    </source>
</reference>